<evidence type="ECO:0000255" key="1"/>
<evidence type="ECO:0000269" key="2">
    <source>
    </source>
</evidence>
<evidence type="ECO:0000303" key="3">
    <source>
    </source>
</evidence>
<evidence type="ECO:0000305" key="4"/>
<proteinExistence type="evidence at transcript level"/>
<accession>Q7Y211</accession>
<accession>Q9SCM9</accession>
<organism>
    <name type="scientific">Arabidopsis thaliana</name>
    <name type="common">Mouse-ear cress</name>
    <dbReference type="NCBI Taxonomy" id="3702"/>
    <lineage>
        <taxon>Eukaryota</taxon>
        <taxon>Viridiplantae</taxon>
        <taxon>Streptophyta</taxon>
        <taxon>Embryophyta</taxon>
        <taxon>Tracheophyta</taxon>
        <taxon>Spermatophyta</taxon>
        <taxon>Magnoliopsida</taxon>
        <taxon>eudicotyledons</taxon>
        <taxon>Gunneridae</taxon>
        <taxon>Pentapetalae</taxon>
        <taxon>rosids</taxon>
        <taxon>malvids</taxon>
        <taxon>Brassicales</taxon>
        <taxon>Brassicaceae</taxon>
        <taxon>Camelineae</taxon>
        <taxon>Arabidopsis</taxon>
    </lineage>
</organism>
<gene>
    <name type="primary">PCMP-H81</name>
    <name evidence="3" type="synonym">OTP84</name>
    <name type="ordered locus">At3g57430</name>
    <name type="ORF">T8H10.30</name>
</gene>
<reference key="1">
    <citation type="journal article" date="2000" name="Nature">
        <title>Sequence and analysis of chromosome 3 of the plant Arabidopsis thaliana.</title>
        <authorList>
            <person name="Salanoubat M."/>
            <person name="Lemcke K."/>
            <person name="Rieger M."/>
            <person name="Ansorge W."/>
            <person name="Unseld M."/>
            <person name="Fartmann B."/>
            <person name="Valle G."/>
            <person name="Bloecker H."/>
            <person name="Perez-Alonso M."/>
            <person name="Obermaier B."/>
            <person name="Delseny M."/>
            <person name="Boutry M."/>
            <person name="Grivell L.A."/>
            <person name="Mache R."/>
            <person name="Puigdomenech P."/>
            <person name="De Simone V."/>
            <person name="Choisne N."/>
            <person name="Artiguenave F."/>
            <person name="Robert C."/>
            <person name="Brottier P."/>
            <person name="Wincker P."/>
            <person name="Cattolico L."/>
            <person name="Weissenbach J."/>
            <person name="Saurin W."/>
            <person name="Quetier F."/>
            <person name="Schaefer M."/>
            <person name="Mueller-Auer S."/>
            <person name="Gabel C."/>
            <person name="Fuchs M."/>
            <person name="Benes V."/>
            <person name="Wurmbach E."/>
            <person name="Drzonek H."/>
            <person name="Erfle H."/>
            <person name="Jordan N."/>
            <person name="Bangert S."/>
            <person name="Wiedelmann R."/>
            <person name="Kranz H."/>
            <person name="Voss H."/>
            <person name="Holland R."/>
            <person name="Brandt P."/>
            <person name="Nyakatura G."/>
            <person name="Vezzi A."/>
            <person name="D'Angelo M."/>
            <person name="Pallavicini A."/>
            <person name="Toppo S."/>
            <person name="Simionati B."/>
            <person name="Conrad A."/>
            <person name="Hornischer K."/>
            <person name="Kauer G."/>
            <person name="Loehnert T.-H."/>
            <person name="Nordsiek G."/>
            <person name="Reichelt J."/>
            <person name="Scharfe M."/>
            <person name="Schoen O."/>
            <person name="Bargues M."/>
            <person name="Terol J."/>
            <person name="Climent J."/>
            <person name="Navarro P."/>
            <person name="Collado C."/>
            <person name="Perez-Perez A."/>
            <person name="Ottenwaelder B."/>
            <person name="Duchemin D."/>
            <person name="Cooke R."/>
            <person name="Laudie M."/>
            <person name="Berger-Llauro C."/>
            <person name="Purnelle B."/>
            <person name="Masuy D."/>
            <person name="de Haan M."/>
            <person name="Maarse A.C."/>
            <person name="Alcaraz J.-P."/>
            <person name="Cottet A."/>
            <person name="Casacuberta E."/>
            <person name="Monfort A."/>
            <person name="Argiriou A."/>
            <person name="Flores M."/>
            <person name="Liguori R."/>
            <person name="Vitale D."/>
            <person name="Mannhaupt G."/>
            <person name="Haase D."/>
            <person name="Schoof H."/>
            <person name="Rudd S."/>
            <person name="Zaccaria P."/>
            <person name="Mewes H.-W."/>
            <person name="Mayer K.F.X."/>
            <person name="Kaul S."/>
            <person name="Town C.D."/>
            <person name="Koo H.L."/>
            <person name="Tallon L.J."/>
            <person name="Jenkins J."/>
            <person name="Rooney T."/>
            <person name="Rizzo M."/>
            <person name="Walts A."/>
            <person name="Utterback T."/>
            <person name="Fujii C.Y."/>
            <person name="Shea T.P."/>
            <person name="Creasy T.H."/>
            <person name="Haas B."/>
            <person name="Maiti R."/>
            <person name="Wu D."/>
            <person name="Peterson J."/>
            <person name="Van Aken S."/>
            <person name="Pai G."/>
            <person name="Militscher J."/>
            <person name="Sellers P."/>
            <person name="Gill J.E."/>
            <person name="Feldblyum T.V."/>
            <person name="Preuss D."/>
            <person name="Lin X."/>
            <person name="Nierman W.C."/>
            <person name="Salzberg S.L."/>
            <person name="White O."/>
            <person name="Venter J.C."/>
            <person name="Fraser C.M."/>
            <person name="Kaneko T."/>
            <person name="Nakamura Y."/>
            <person name="Sato S."/>
            <person name="Kato T."/>
            <person name="Asamizu E."/>
            <person name="Sasamoto S."/>
            <person name="Kimura T."/>
            <person name="Idesawa K."/>
            <person name="Kawashima K."/>
            <person name="Kishida Y."/>
            <person name="Kiyokawa C."/>
            <person name="Kohara M."/>
            <person name="Matsumoto M."/>
            <person name="Matsuno A."/>
            <person name="Muraki A."/>
            <person name="Nakayama S."/>
            <person name="Nakazaki N."/>
            <person name="Shinpo S."/>
            <person name="Takeuchi C."/>
            <person name="Wada T."/>
            <person name="Watanabe A."/>
            <person name="Yamada M."/>
            <person name="Yasuda M."/>
            <person name="Tabata S."/>
        </authorList>
    </citation>
    <scope>NUCLEOTIDE SEQUENCE [LARGE SCALE GENOMIC DNA]</scope>
    <source>
        <strain>cv. Columbia</strain>
    </source>
</reference>
<reference key="2">
    <citation type="journal article" date="2017" name="Plant J.">
        <title>Araport11: a complete reannotation of the Arabidopsis thaliana reference genome.</title>
        <authorList>
            <person name="Cheng C.Y."/>
            <person name="Krishnakumar V."/>
            <person name="Chan A.P."/>
            <person name="Thibaud-Nissen F."/>
            <person name="Schobel S."/>
            <person name="Town C.D."/>
        </authorList>
    </citation>
    <scope>GENOME REANNOTATION</scope>
    <source>
        <strain>cv. Columbia</strain>
    </source>
</reference>
<reference key="3">
    <citation type="journal article" date="2003" name="Science">
        <title>Empirical analysis of transcriptional activity in the Arabidopsis genome.</title>
        <authorList>
            <person name="Yamada K."/>
            <person name="Lim J."/>
            <person name="Dale J.M."/>
            <person name="Chen H."/>
            <person name="Shinn P."/>
            <person name="Palm C.J."/>
            <person name="Southwick A.M."/>
            <person name="Wu H.C."/>
            <person name="Kim C.J."/>
            <person name="Nguyen M."/>
            <person name="Pham P.K."/>
            <person name="Cheuk R.F."/>
            <person name="Karlin-Newmann G."/>
            <person name="Liu S.X."/>
            <person name="Lam B."/>
            <person name="Sakano H."/>
            <person name="Wu T."/>
            <person name="Yu G."/>
            <person name="Miranda M."/>
            <person name="Quach H.L."/>
            <person name="Tripp M."/>
            <person name="Chang C.H."/>
            <person name="Lee J.M."/>
            <person name="Toriumi M.J."/>
            <person name="Chan M.M."/>
            <person name="Tang C.C."/>
            <person name="Onodera C.S."/>
            <person name="Deng J.M."/>
            <person name="Akiyama K."/>
            <person name="Ansari Y."/>
            <person name="Arakawa T."/>
            <person name="Banh J."/>
            <person name="Banno F."/>
            <person name="Bowser L."/>
            <person name="Brooks S.Y."/>
            <person name="Carninci P."/>
            <person name="Chao Q."/>
            <person name="Choy N."/>
            <person name="Enju A."/>
            <person name="Goldsmith A.D."/>
            <person name="Gurjal M."/>
            <person name="Hansen N.F."/>
            <person name="Hayashizaki Y."/>
            <person name="Johnson-Hopson C."/>
            <person name="Hsuan V.W."/>
            <person name="Iida K."/>
            <person name="Karnes M."/>
            <person name="Khan S."/>
            <person name="Koesema E."/>
            <person name="Ishida J."/>
            <person name="Jiang P.X."/>
            <person name="Jones T."/>
            <person name="Kawai J."/>
            <person name="Kamiya A."/>
            <person name="Meyers C."/>
            <person name="Nakajima M."/>
            <person name="Narusaka M."/>
            <person name="Seki M."/>
            <person name="Sakurai T."/>
            <person name="Satou M."/>
            <person name="Tamse R."/>
            <person name="Vaysberg M."/>
            <person name="Wallender E.K."/>
            <person name="Wong C."/>
            <person name="Yamamura Y."/>
            <person name="Yuan S."/>
            <person name="Shinozaki K."/>
            <person name="Davis R.W."/>
            <person name="Theologis A."/>
            <person name="Ecker J.R."/>
        </authorList>
    </citation>
    <scope>NUCLEOTIDE SEQUENCE [LARGE SCALE MRNA]</scope>
    <source>
        <strain>cv. Columbia</strain>
    </source>
</reference>
<reference key="4">
    <citation type="journal article" date="2004" name="Plant Cell">
        <title>Genome-wide analysis of Arabidopsis pentatricopeptide repeat proteins reveals their essential role in organelle biogenesis.</title>
        <authorList>
            <person name="Lurin C."/>
            <person name="Andres C."/>
            <person name="Aubourg S."/>
            <person name="Bellaoui M."/>
            <person name="Bitton F."/>
            <person name="Bruyere C."/>
            <person name="Caboche M."/>
            <person name="Debast C."/>
            <person name="Gualberto J."/>
            <person name="Hoffmann B."/>
            <person name="Lecharny A."/>
            <person name="Le Ret M."/>
            <person name="Martin-Magniette M.-L."/>
            <person name="Mireau H."/>
            <person name="Peeters N."/>
            <person name="Renou J.-P."/>
            <person name="Szurek B."/>
            <person name="Taconnat L."/>
            <person name="Small I."/>
        </authorList>
    </citation>
    <scope>GENE FAMILY</scope>
</reference>
<reference key="5">
    <citation type="journal article" date="2009" name="Plant Cell">
        <title>A study of new Arabidopsis chloroplast RNA editing mutants reveals general features of editing factors and their target sites.</title>
        <authorList>
            <person name="Hammani K."/>
            <person name="Okuda K."/>
            <person name="Tanz S.K."/>
            <person name="Chateigner-Boutin A.L."/>
            <person name="Shikanai T."/>
            <person name="Small I."/>
        </authorList>
    </citation>
    <scope>FUNCTION</scope>
    <scope>SUBCELLULAR LOCATION</scope>
    <scope>DISRUPTION PHENOTYPE</scope>
</reference>
<dbReference type="EMBL" id="AL133248">
    <property type="protein sequence ID" value="CAB66100.1"/>
    <property type="status" value="ALT_INIT"/>
    <property type="molecule type" value="Genomic_DNA"/>
</dbReference>
<dbReference type="EMBL" id="CP002686">
    <property type="protein sequence ID" value="AEE79654.1"/>
    <property type="molecule type" value="Genomic_DNA"/>
</dbReference>
<dbReference type="EMBL" id="BT008634">
    <property type="protein sequence ID" value="AAP40452.1"/>
    <property type="molecule type" value="mRNA"/>
</dbReference>
<dbReference type="PIR" id="T46179">
    <property type="entry name" value="T46179"/>
</dbReference>
<dbReference type="RefSeq" id="NP_191302.2">
    <property type="nucleotide sequence ID" value="NM_115603.4"/>
</dbReference>
<dbReference type="SMR" id="Q7Y211"/>
<dbReference type="FunCoup" id="Q7Y211">
    <property type="interactions" value="418"/>
</dbReference>
<dbReference type="STRING" id="3702.Q7Y211"/>
<dbReference type="PaxDb" id="3702-AT3G57430.1"/>
<dbReference type="ProteomicsDB" id="249196"/>
<dbReference type="EnsemblPlants" id="AT3G57430.1">
    <property type="protein sequence ID" value="AT3G57430.1"/>
    <property type="gene ID" value="AT3G57430"/>
</dbReference>
<dbReference type="GeneID" id="824910"/>
<dbReference type="Gramene" id="AT3G57430.1">
    <property type="protein sequence ID" value="AT3G57430.1"/>
    <property type="gene ID" value="AT3G57430"/>
</dbReference>
<dbReference type="KEGG" id="ath:AT3G57430"/>
<dbReference type="Araport" id="AT3G57430"/>
<dbReference type="TAIR" id="AT3G57430">
    <property type="gene designation" value="OTP84"/>
</dbReference>
<dbReference type="eggNOG" id="KOG4197">
    <property type="taxonomic scope" value="Eukaryota"/>
</dbReference>
<dbReference type="HOGENOM" id="CLU_002706_15_1_1"/>
<dbReference type="InParanoid" id="Q7Y211"/>
<dbReference type="OMA" id="ACSHLEM"/>
<dbReference type="PhylomeDB" id="Q7Y211"/>
<dbReference type="PRO" id="PR:Q7Y211"/>
<dbReference type="Proteomes" id="UP000006548">
    <property type="component" value="Chromosome 3"/>
</dbReference>
<dbReference type="ExpressionAtlas" id="Q7Y211">
    <property type="expression patterns" value="baseline and differential"/>
</dbReference>
<dbReference type="GO" id="GO:0009507">
    <property type="term" value="C:chloroplast"/>
    <property type="evidence" value="ECO:0000314"/>
    <property type="project" value="TAIR"/>
</dbReference>
<dbReference type="GO" id="GO:0003729">
    <property type="term" value="F:mRNA binding"/>
    <property type="evidence" value="ECO:0000314"/>
    <property type="project" value="TAIR"/>
</dbReference>
<dbReference type="GO" id="GO:0008270">
    <property type="term" value="F:zinc ion binding"/>
    <property type="evidence" value="ECO:0007669"/>
    <property type="project" value="InterPro"/>
</dbReference>
<dbReference type="GO" id="GO:0031425">
    <property type="term" value="P:chloroplast RNA processing"/>
    <property type="evidence" value="ECO:0000315"/>
    <property type="project" value="TAIR"/>
</dbReference>
<dbReference type="GO" id="GO:0006397">
    <property type="term" value="P:mRNA processing"/>
    <property type="evidence" value="ECO:0007669"/>
    <property type="project" value="UniProtKB-KW"/>
</dbReference>
<dbReference type="GO" id="GO:0009451">
    <property type="term" value="P:RNA modification"/>
    <property type="evidence" value="ECO:0007669"/>
    <property type="project" value="InterPro"/>
</dbReference>
<dbReference type="FunFam" id="1.25.40.10:FF:001359">
    <property type="entry name" value="Pentatricopeptide repeat-containing protein At3g57430, chloroplastic"/>
    <property type="match status" value="1"/>
</dbReference>
<dbReference type="FunFam" id="1.25.40.10:FF:002471">
    <property type="entry name" value="Pentatricopeptide repeat-containing protein chloroplastic"/>
    <property type="match status" value="1"/>
</dbReference>
<dbReference type="FunFam" id="1.25.40.10:FF:000733">
    <property type="entry name" value="Pentatricopeptide repeat-containing protein, chloroplastic"/>
    <property type="match status" value="1"/>
</dbReference>
<dbReference type="FunFam" id="1.25.40.10:FF:001178">
    <property type="entry name" value="Pentatricopeptide repeat-containing protein, chloroplastic"/>
    <property type="match status" value="1"/>
</dbReference>
<dbReference type="Gene3D" id="1.25.40.10">
    <property type="entry name" value="Tetratricopeptide repeat domain"/>
    <property type="match status" value="5"/>
</dbReference>
<dbReference type="InterPro" id="IPR032867">
    <property type="entry name" value="DYW_dom"/>
</dbReference>
<dbReference type="InterPro" id="IPR046848">
    <property type="entry name" value="E_motif"/>
</dbReference>
<dbReference type="InterPro" id="IPR002885">
    <property type="entry name" value="Pentatricopeptide_rpt"/>
</dbReference>
<dbReference type="InterPro" id="IPR046960">
    <property type="entry name" value="PPR_At4g14850-like_plant"/>
</dbReference>
<dbReference type="InterPro" id="IPR011990">
    <property type="entry name" value="TPR-like_helical_dom_sf"/>
</dbReference>
<dbReference type="NCBIfam" id="TIGR00756">
    <property type="entry name" value="PPR"/>
    <property type="match status" value="4"/>
</dbReference>
<dbReference type="PANTHER" id="PTHR47926">
    <property type="entry name" value="PENTATRICOPEPTIDE REPEAT-CONTAINING PROTEIN"/>
    <property type="match status" value="1"/>
</dbReference>
<dbReference type="PANTHER" id="PTHR47926:SF514">
    <property type="entry name" value="TETRATRICOPEPTIDE-LIKE HELICAL DOMAIN SUPERFAMILY, DYW DOMAIN-CONTAINING PROTEIN"/>
    <property type="match status" value="1"/>
</dbReference>
<dbReference type="Pfam" id="PF14432">
    <property type="entry name" value="DYW_deaminase"/>
    <property type="match status" value="1"/>
</dbReference>
<dbReference type="Pfam" id="PF20431">
    <property type="entry name" value="E_motif"/>
    <property type="match status" value="1"/>
</dbReference>
<dbReference type="Pfam" id="PF01535">
    <property type="entry name" value="PPR"/>
    <property type="match status" value="5"/>
</dbReference>
<dbReference type="Pfam" id="PF13041">
    <property type="entry name" value="PPR_2"/>
    <property type="match status" value="3"/>
</dbReference>
<dbReference type="SUPFAM" id="SSF48452">
    <property type="entry name" value="TPR-like"/>
    <property type="match status" value="1"/>
</dbReference>
<dbReference type="PROSITE" id="PS51375">
    <property type="entry name" value="PPR"/>
    <property type="match status" value="17"/>
</dbReference>
<name>PP285_ARATH</name>
<protein>
    <recommendedName>
        <fullName>Pentatricopeptide repeat-containing protein At3g57430, chloroplastic</fullName>
    </recommendedName>
    <alternativeName>
        <fullName evidence="3">Protein ORGANELLE TRANSCRIPT PROCESSING 84</fullName>
    </alternativeName>
</protein>
<comment type="function">
    <text evidence="2">Involved in RNA editing events in chloroplasts. Required for the editing of a single site in ndhB and ndhF transcripts, which are two plastid-encoded subunits of the chloroplast NAD(P)H dehydrogenase (NDH) complex. Required for the editing of a single site in psbZ. Required for optimal activity of the NDH complex of the photosynthetic electron transport chain.</text>
</comment>
<comment type="subcellular location">
    <subcellularLocation>
        <location evidence="2">Plastid</location>
        <location evidence="2">Chloroplast</location>
    </subcellularLocation>
</comment>
<comment type="disruption phenotype">
    <text evidence="2">No visible phenotype under normal growth conditions.</text>
</comment>
<comment type="similarity">
    <text evidence="4">Belongs to the PPR family. PCMP-H subfamily.</text>
</comment>
<comment type="sequence caution" evidence="4">
    <conflict type="erroneous initiation">
        <sequence resource="EMBL-CDS" id="CAB66100"/>
    </conflict>
    <text>Truncated N-terminus.</text>
</comment>
<comment type="online information" name="Pentatricopeptide repeat proteins">
    <link uri="https://ppr.plantenergy.uwa.edu.au"/>
</comment>
<keyword id="KW-0150">Chloroplast</keyword>
<keyword id="KW-0507">mRNA processing</keyword>
<keyword id="KW-0934">Plastid</keyword>
<keyword id="KW-1185">Reference proteome</keyword>
<keyword id="KW-0677">Repeat</keyword>
<keyword id="KW-0809">Transit peptide</keyword>
<feature type="transit peptide" description="Chloroplast" evidence="1">
    <location>
        <begin position="1"/>
        <end position="44"/>
    </location>
</feature>
<feature type="chain" id="PRO_0000356144" description="Pentatricopeptide repeat-containing protein At3g57430, chloroplastic" evidence="1">
    <location>
        <begin position="45"/>
        <end position="890"/>
    </location>
</feature>
<feature type="repeat" description="PPR 1">
    <location>
        <begin position="61"/>
        <end position="95"/>
    </location>
</feature>
<feature type="repeat" description="PPR 2">
    <location>
        <begin position="96"/>
        <end position="130"/>
    </location>
</feature>
<feature type="repeat" description="PPR 3">
    <location>
        <begin position="132"/>
        <end position="162"/>
    </location>
</feature>
<feature type="repeat" description="PPR 4">
    <location>
        <begin position="163"/>
        <end position="197"/>
    </location>
</feature>
<feature type="repeat" description="PPR 5">
    <location>
        <begin position="198"/>
        <end position="231"/>
    </location>
</feature>
<feature type="repeat" description="PPR 6">
    <location>
        <begin position="235"/>
        <end position="265"/>
    </location>
</feature>
<feature type="repeat" description="PPR 7">
    <location>
        <begin position="266"/>
        <end position="300"/>
    </location>
</feature>
<feature type="repeat" description="PPR 8">
    <location>
        <begin position="301"/>
        <end position="335"/>
    </location>
</feature>
<feature type="repeat" description="PPR 9">
    <location>
        <begin position="337"/>
        <end position="371"/>
    </location>
</feature>
<feature type="repeat" description="PPR 10">
    <location>
        <begin position="372"/>
        <end position="398"/>
    </location>
</feature>
<feature type="repeat" description="PPR 11">
    <location>
        <begin position="404"/>
        <end position="438"/>
    </location>
</feature>
<feature type="repeat" description="PPR 12">
    <location>
        <begin position="439"/>
        <end position="473"/>
    </location>
</feature>
<feature type="repeat" description="PPR 13">
    <location>
        <begin position="474"/>
        <end position="504"/>
    </location>
</feature>
<feature type="repeat" description="PPR 14">
    <location>
        <begin position="516"/>
        <end position="550"/>
    </location>
</feature>
<feature type="repeat" description="PPR 15">
    <location>
        <begin position="551"/>
        <end position="581"/>
    </location>
</feature>
<feature type="repeat" description="PPR 16">
    <location>
        <begin position="582"/>
        <end position="616"/>
    </location>
</feature>
<feature type="repeat" description="PPR 17">
    <location>
        <begin position="617"/>
        <end position="652"/>
    </location>
</feature>
<feature type="repeat" description="PPR 18">
    <location>
        <begin position="653"/>
        <end position="683"/>
    </location>
</feature>
<feature type="region of interest" description="Type E motif">
    <location>
        <begin position="689"/>
        <end position="764"/>
    </location>
</feature>
<feature type="region of interest" description="Type E(+) motif">
    <location>
        <begin position="765"/>
        <end position="795"/>
    </location>
</feature>
<feature type="region of interest" description="Type DYW motif">
    <location>
        <begin position="796"/>
        <end position="890"/>
    </location>
</feature>
<feature type="sequence conflict" description="In Ref. 3; AAP40452." evidence="4" ref="3">
    <original>F</original>
    <variation>L</variation>
    <location>
        <position position="17"/>
    </location>
</feature>
<sequence length="890" mass="99276">MSCPLAFTFSLPSIFPFPSQLLPFSRHKHPYLLRATPTSATEDVASAVSGAPSIFISQSRSPEWWIDLLRSKVRSNLLREAVLTYVDMIVLGIKPDNYAFPALLKAVADLQDMELGKQIHAHVYKFGYGVDSVTVANTLVNLYRKCGDFGAVYKVFDRISERNQVSWNSLISSLCSFEKWEMALEAFRCMLDENVEPSSFTLVSVVTACSNLPMPEGLMMGKQVHAYGLRKGELNSFIINTLVAMYGKLGKLASSKVLLGSFGGRDLVTWNTVLSSLCQNEQLLEALEYLREMVLEGVEPDEFTISSVLPACSHLEMLRTGKELHAYALKNGSLDENSFVGSALVDMYCNCKQVLSGRRVFDGMFDRKIGLWNAMIAGYSQNEHDKEALLLFIGMEESAGLLANSTTMAGVVPACVRSGAFSRKEAIHGFVVKRGLDRDRFVQNTLMDMYSRLGKIDIAMRIFGKMEDRDLVTWNTMITGYVFSEHHEDALLLLHKMQNLERKVSKGASRVSLKPNSITLMTILPSCAALSALAKGKEIHAYAIKNNLATDVAVGSALVDMYAKCGCLQMSRKVFDQIPQKNVITWNVIIMAYGMHGNGQEAIDLLRMMMVQGVKPNEVTFISVFAACSHSGMVDEGLRIFYVMKPDYGVEPSSDHYACVVDLLGRAGRIKEAYQLMNMMPRDFNKAGAWSSLLGASRIHNNLEIGEIAAQNLIQLEPNVASHYVLLANIYSSAGLWDKATEVRRNMKEQGVRKEPGCSWIEHGDEVHKFVAGDSSHPQSEKLSGYLETLWERMRKEGYVPDTSCVLHNVEEDEKEILLCGHSEKLAIAFGILNTSPGTIIRVAKNLRVCNDCHLATKFISKIVDREIILRDVRRFHRFKNGTCSCGDYW</sequence>